<reference key="1">
    <citation type="journal article" date="2012" name="Stand. Genomic Sci.">
        <title>Complete genome sequence of Polynucleobacter necessarius subsp. asymbioticus type strain (QLW-P1DMWA-1(T)).</title>
        <authorList>
            <person name="Meincke L."/>
            <person name="Copeland A."/>
            <person name="Lapidus A."/>
            <person name="Lucas S."/>
            <person name="Berry K.W."/>
            <person name="Del Rio T.G."/>
            <person name="Hammon N."/>
            <person name="Dalin E."/>
            <person name="Tice H."/>
            <person name="Pitluck S."/>
            <person name="Richardson P."/>
            <person name="Bruce D."/>
            <person name="Goodwin L."/>
            <person name="Han C."/>
            <person name="Tapia R."/>
            <person name="Detter J.C."/>
            <person name="Schmutz J."/>
            <person name="Brettin T."/>
            <person name="Larimer F."/>
            <person name="Land M."/>
            <person name="Hauser L."/>
            <person name="Kyrpides N.C."/>
            <person name="Ivanova N."/>
            <person name="Goker M."/>
            <person name="Woyke T."/>
            <person name="Wu Q.L."/>
            <person name="Pockl M."/>
            <person name="Hahn M.W."/>
            <person name="Klenk H.P."/>
        </authorList>
    </citation>
    <scope>NUCLEOTIDE SEQUENCE [LARGE SCALE GENOMIC DNA]</scope>
    <source>
        <strain>DSM 18221 / CIP 109841 / QLW-P1DMWA-1</strain>
    </source>
</reference>
<organism>
    <name type="scientific">Polynucleobacter asymbioticus (strain DSM 18221 / CIP 109841 / QLW-P1DMWA-1)</name>
    <name type="common">Polynucleobacter necessarius subsp. asymbioticus</name>
    <dbReference type="NCBI Taxonomy" id="312153"/>
    <lineage>
        <taxon>Bacteria</taxon>
        <taxon>Pseudomonadati</taxon>
        <taxon>Pseudomonadota</taxon>
        <taxon>Betaproteobacteria</taxon>
        <taxon>Burkholderiales</taxon>
        <taxon>Burkholderiaceae</taxon>
        <taxon>Polynucleobacter</taxon>
    </lineage>
</organism>
<evidence type="ECO:0000255" key="1">
    <source>
        <dbReference type="HAMAP-Rule" id="MF_00150"/>
    </source>
</evidence>
<feature type="chain" id="PRO_1000076736" description="N-acetyl-gamma-glutamyl-phosphate reductase">
    <location>
        <begin position="1"/>
        <end position="352"/>
    </location>
</feature>
<feature type="active site" evidence="1">
    <location>
        <position position="149"/>
    </location>
</feature>
<sequence length="352" mass="37777">MIKVGIVGGTGYTGVELLRLLAQHPEVELTAITSRTEAGMPVAEMFPSLRGRVALKFTTPDEAKLNECDVVFFATPHGVAMAQAKELLANGVKVLDLAADFRLKDVKEFAKWYGMEHNCPEILAEAVYGLPEINRDAIKKARVVGLAGCYPTSVQLGLAPLLSPKSTGGKHLIDGTHIISDSKSGTSGAGRKAEIGTLLSEASDNFKAYSVKGHRHLPEIEQGLKAIAGHDQIGLTFVPHLTPMIRGIHSTLYVRLTEAGKDVDYQKLYENFYKDEPFVDVMPAGSHPETRSVRGSNGIRIAIHRPGGGDTLVILVVEDNLVKGASGQGVQCMNLMFGLPETTGLTQIAVSP</sequence>
<accession>A4T032</accession>
<dbReference type="EC" id="1.2.1.38" evidence="1"/>
<dbReference type="EMBL" id="CP000655">
    <property type="protein sequence ID" value="ABP35096.1"/>
    <property type="molecule type" value="Genomic_DNA"/>
</dbReference>
<dbReference type="RefSeq" id="WP_011903719.1">
    <property type="nucleotide sequence ID" value="NC_009379.1"/>
</dbReference>
<dbReference type="SMR" id="A4T032"/>
<dbReference type="GeneID" id="31482274"/>
<dbReference type="KEGG" id="pnu:Pnuc_1884"/>
<dbReference type="eggNOG" id="COG0002">
    <property type="taxonomic scope" value="Bacteria"/>
</dbReference>
<dbReference type="HOGENOM" id="CLU_006384_0_1_4"/>
<dbReference type="UniPathway" id="UPA00068">
    <property type="reaction ID" value="UER00108"/>
</dbReference>
<dbReference type="Proteomes" id="UP000000231">
    <property type="component" value="Chromosome"/>
</dbReference>
<dbReference type="GO" id="GO:0005737">
    <property type="term" value="C:cytoplasm"/>
    <property type="evidence" value="ECO:0007669"/>
    <property type="project" value="UniProtKB-SubCell"/>
</dbReference>
<dbReference type="GO" id="GO:0003942">
    <property type="term" value="F:N-acetyl-gamma-glutamyl-phosphate reductase activity"/>
    <property type="evidence" value="ECO:0007669"/>
    <property type="project" value="UniProtKB-UniRule"/>
</dbReference>
<dbReference type="GO" id="GO:0051287">
    <property type="term" value="F:NAD binding"/>
    <property type="evidence" value="ECO:0007669"/>
    <property type="project" value="InterPro"/>
</dbReference>
<dbReference type="GO" id="GO:0070401">
    <property type="term" value="F:NADP+ binding"/>
    <property type="evidence" value="ECO:0007669"/>
    <property type="project" value="InterPro"/>
</dbReference>
<dbReference type="GO" id="GO:0006526">
    <property type="term" value="P:L-arginine biosynthetic process"/>
    <property type="evidence" value="ECO:0007669"/>
    <property type="project" value="UniProtKB-UniRule"/>
</dbReference>
<dbReference type="CDD" id="cd23934">
    <property type="entry name" value="AGPR_1_C"/>
    <property type="match status" value="1"/>
</dbReference>
<dbReference type="CDD" id="cd17895">
    <property type="entry name" value="AGPR_1_N"/>
    <property type="match status" value="1"/>
</dbReference>
<dbReference type="FunFam" id="3.30.360.10:FF:000014">
    <property type="entry name" value="N-acetyl-gamma-glutamyl-phosphate reductase"/>
    <property type="match status" value="1"/>
</dbReference>
<dbReference type="Gene3D" id="3.30.360.10">
    <property type="entry name" value="Dihydrodipicolinate Reductase, domain 2"/>
    <property type="match status" value="1"/>
</dbReference>
<dbReference type="Gene3D" id="3.40.50.720">
    <property type="entry name" value="NAD(P)-binding Rossmann-like Domain"/>
    <property type="match status" value="1"/>
</dbReference>
<dbReference type="HAMAP" id="MF_00150">
    <property type="entry name" value="ArgC_type1"/>
    <property type="match status" value="1"/>
</dbReference>
<dbReference type="InterPro" id="IPR023013">
    <property type="entry name" value="AGPR_AS"/>
</dbReference>
<dbReference type="InterPro" id="IPR000706">
    <property type="entry name" value="AGPR_type-1"/>
</dbReference>
<dbReference type="InterPro" id="IPR036291">
    <property type="entry name" value="NAD(P)-bd_dom_sf"/>
</dbReference>
<dbReference type="InterPro" id="IPR050085">
    <property type="entry name" value="NAGSA_dehydrogenase"/>
</dbReference>
<dbReference type="InterPro" id="IPR000534">
    <property type="entry name" value="Semialdehyde_DH_NAD-bd"/>
</dbReference>
<dbReference type="NCBIfam" id="TIGR01850">
    <property type="entry name" value="argC"/>
    <property type="match status" value="1"/>
</dbReference>
<dbReference type="PANTHER" id="PTHR32338:SF10">
    <property type="entry name" value="N-ACETYL-GAMMA-GLUTAMYL-PHOSPHATE REDUCTASE, CHLOROPLASTIC-RELATED"/>
    <property type="match status" value="1"/>
</dbReference>
<dbReference type="PANTHER" id="PTHR32338">
    <property type="entry name" value="N-ACETYL-GAMMA-GLUTAMYL-PHOSPHATE REDUCTASE, CHLOROPLASTIC-RELATED-RELATED"/>
    <property type="match status" value="1"/>
</dbReference>
<dbReference type="Pfam" id="PF01118">
    <property type="entry name" value="Semialdhyde_dh"/>
    <property type="match status" value="1"/>
</dbReference>
<dbReference type="Pfam" id="PF22698">
    <property type="entry name" value="Semialdhyde_dhC_1"/>
    <property type="match status" value="1"/>
</dbReference>
<dbReference type="SMART" id="SM00859">
    <property type="entry name" value="Semialdhyde_dh"/>
    <property type="match status" value="1"/>
</dbReference>
<dbReference type="SUPFAM" id="SSF55347">
    <property type="entry name" value="Glyceraldehyde-3-phosphate dehydrogenase-like, C-terminal domain"/>
    <property type="match status" value="1"/>
</dbReference>
<dbReference type="SUPFAM" id="SSF51735">
    <property type="entry name" value="NAD(P)-binding Rossmann-fold domains"/>
    <property type="match status" value="1"/>
</dbReference>
<dbReference type="PROSITE" id="PS01224">
    <property type="entry name" value="ARGC"/>
    <property type="match status" value="1"/>
</dbReference>
<protein>
    <recommendedName>
        <fullName evidence="1">N-acetyl-gamma-glutamyl-phosphate reductase</fullName>
        <shortName evidence="1">AGPR</shortName>
        <ecNumber evidence="1">1.2.1.38</ecNumber>
    </recommendedName>
    <alternativeName>
        <fullName evidence="1">N-acetyl-glutamate semialdehyde dehydrogenase</fullName>
        <shortName evidence="1">NAGSA dehydrogenase</shortName>
    </alternativeName>
</protein>
<name>ARGC_POLAQ</name>
<comment type="function">
    <text evidence="1">Catalyzes the NADPH-dependent reduction of N-acetyl-5-glutamyl phosphate to yield N-acetyl-L-glutamate 5-semialdehyde.</text>
</comment>
<comment type="catalytic activity">
    <reaction evidence="1">
        <text>N-acetyl-L-glutamate 5-semialdehyde + phosphate + NADP(+) = N-acetyl-L-glutamyl 5-phosphate + NADPH + H(+)</text>
        <dbReference type="Rhea" id="RHEA:21588"/>
        <dbReference type="ChEBI" id="CHEBI:15378"/>
        <dbReference type="ChEBI" id="CHEBI:29123"/>
        <dbReference type="ChEBI" id="CHEBI:43474"/>
        <dbReference type="ChEBI" id="CHEBI:57783"/>
        <dbReference type="ChEBI" id="CHEBI:57936"/>
        <dbReference type="ChEBI" id="CHEBI:58349"/>
        <dbReference type="EC" id="1.2.1.38"/>
    </reaction>
</comment>
<comment type="pathway">
    <text evidence="1">Amino-acid biosynthesis; L-arginine biosynthesis; N(2)-acetyl-L-ornithine from L-glutamate: step 3/4.</text>
</comment>
<comment type="subcellular location">
    <subcellularLocation>
        <location evidence="1">Cytoplasm</location>
    </subcellularLocation>
</comment>
<comment type="similarity">
    <text evidence="1">Belongs to the NAGSA dehydrogenase family. Type 1 subfamily.</text>
</comment>
<proteinExistence type="inferred from homology"/>
<gene>
    <name evidence="1" type="primary">argC</name>
    <name type="ordered locus">Pnuc_1884</name>
</gene>
<keyword id="KW-0028">Amino-acid biosynthesis</keyword>
<keyword id="KW-0055">Arginine biosynthesis</keyword>
<keyword id="KW-0963">Cytoplasm</keyword>
<keyword id="KW-0521">NADP</keyword>
<keyword id="KW-0560">Oxidoreductase</keyword>
<keyword id="KW-1185">Reference proteome</keyword>